<dbReference type="EMBL" id="M37188">
    <property type="protein sequence ID" value="AAA86790.1"/>
    <property type="molecule type" value="Genomic_DNA"/>
</dbReference>
<dbReference type="EMBL" id="X52152">
    <property type="protein sequence ID" value="CAA36400.1"/>
    <property type="molecule type" value="Genomic_DNA"/>
</dbReference>
<dbReference type="EMBL" id="Z49594">
    <property type="protein sequence ID" value="CAA89622.1"/>
    <property type="molecule type" value="Genomic_DNA"/>
</dbReference>
<dbReference type="EMBL" id="BK006943">
    <property type="protein sequence ID" value="DAA08878.1"/>
    <property type="molecule type" value="Genomic_DNA"/>
</dbReference>
<dbReference type="PIR" id="S57115">
    <property type="entry name" value="S57115"/>
</dbReference>
<dbReference type="RefSeq" id="NP_012627.1">
    <property type="nucleotide sequence ID" value="NM_001181751.1"/>
</dbReference>
<dbReference type="SMR" id="P21190"/>
<dbReference type="BioGRID" id="33848">
    <property type="interactions" value="260"/>
</dbReference>
<dbReference type="ComplexPortal" id="CPX-1415">
    <property type="entry name" value="IME1-UME6 transcription activation complex"/>
</dbReference>
<dbReference type="DIP" id="DIP-1567N"/>
<dbReference type="FunCoup" id="P21190">
    <property type="interactions" value="307"/>
</dbReference>
<dbReference type="IntAct" id="P21190">
    <property type="interactions" value="2"/>
</dbReference>
<dbReference type="MINT" id="P21190"/>
<dbReference type="STRING" id="4932.YJR094C"/>
<dbReference type="iPTMnet" id="P21190"/>
<dbReference type="PaxDb" id="4932-YJR094C"/>
<dbReference type="EnsemblFungi" id="YJR094C_mRNA">
    <property type="protein sequence ID" value="YJR094C"/>
    <property type="gene ID" value="YJR094C"/>
</dbReference>
<dbReference type="GeneID" id="853556"/>
<dbReference type="KEGG" id="sce:YJR094C"/>
<dbReference type="AGR" id="SGD:S000003854"/>
<dbReference type="SGD" id="S000003854">
    <property type="gene designation" value="IME1"/>
</dbReference>
<dbReference type="VEuPathDB" id="FungiDB:YJR094C"/>
<dbReference type="eggNOG" id="ENOG502SCKA">
    <property type="taxonomic scope" value="Eukaryota"/>
</dbReference>
<dbReference type="HOGENOM" id="CLU_889059_0_0_1"/>
<dbReference type="InParanoid" id="P21190"/>
<dbReference type="OMA" id="DPFIDEP"/>
<dbReference type="OrthoDB" id="4036215at2759"/>
<dbReference type="BioCyc" id="YEAST:G3O-31721-MONOMER"/>
<dbReference type="BioGRID-ORCS" id="853556">
    <property type="hits" value="0 hits in 10 CRISPR screens"/>
</dbReference>
<dbReference type="PRO" id="PR:P21190"/>
<dbReference type="Proteomes" id="UP000002311">
    <property type="component" value="Chromosome X"/>
</dbReference>
<dbReference type="RNAct" id="P21190">
    <property type="molecule type" value="protein"/>
</dbReference>
<dbReference type="GO" id="GO:0005634">
    <property type="term" value="C:nucleus"/>
    <property type="evidence" value="ECO:0000314"/>
    <property type="project" value="SGD"/>
</dbReference>
<dbReference type="GO" id="GO:0005667">
    <property type="term" value="C:transcription regulator complex"/>
    <property type="evidence" value="ECO:0000303"/>
    <property type="project" value="ComplexPortal"/>
</dbReference>
<dbReference type="GO" id="GO:0051321">
    <property type="term" value="P:meiotic cell cycle"/>
    <property type="evidence" value="ECO:0007669"/>
    <property type="project" value="UniProtKB-KW"/>
</dbReference>
<dbReference type="GO" id="GO:0045944">
    <property type="term" value="P:positive regulation of transcription by RNA polymerase II"/>
    <property type="evidence" value="ECO:0000314"/>
    <property type="project" value="SGD"/>
</dbReference>
<dbReference type="GO" id="GO:0007124">
    <property type="term" value="P:pseudohyphal growth"/>
    <property type="evidence" value="ECO:0000315"/>
    <property type="project" value="SGD"/>
</dbReference>
<dbReference type="GO" id="GO:0040020">
    <property type="term" value="P:regulation of meiotic nuclear division"/>
    <property type="evidence" value="ECO:0000315"/>
    <property type="project" value="UniProtKB"/>
</dbReference>
<dbReference type="GO" id="GO:0042173">
    <property type="term" value="P:regulation of sporulation resulting in formation of a cellular spore"/>
    <property type="evidence" value="ECO:0000314"/>
    <property type="project" value="ComplexPortal"/>
</dbReference>
<dbReference type="GO" id="GO:0006357">
    <property type="term" value="P:regulation of transcription by RNA polymerase II"/>
    <property type="evidence" value="ECO:0000315"/>
    <property type="project" value="SGD"/>
</dbReference>
<dbReference type="GO" id="GO:0043934">
    <property type="term" value="P:sporulation"/>
    <property type="evidence" value="ECO:0000315"/>
    <property type="project" value="SGD"/>
</dbReference>
<dbReference type="GO" id="GO:0030435">
    <property type="term" value="P:sporulation resulting in formation of a cellular spore"/>
    <property type="evidence" value="ECO:0007669"/>
    <property type="project" value="UniProtKB-KW"/>
</dbReference>
<protein>
    <recommendedName>
        <fullName>Meiosis-inducing protein 1</fullName>
    </recommendedName>
</protein>
<accession>P21190</accession>
<accession>D6VWR2</accession>
<evidence type="ECO:0000256" key="1">
    <source>
        <dbReference type="SAM" id="MobiDB-lite"/>
    </source>
</evidence>
<evidence type="ECO:0000269" key="2">
    <source>
    </source>
</evidence>
<keyword id="KW-0010">Activator</keyword>
<keyword id="KW-0469">Meiosis</keyword>
<keyword id="KW-0539">Nucleus</keyword>
<keyword id="KW-1185">Reference proteome</keyword>
<keyword id="KW-0678">Repressor</keyword>
<keyword id="KW-0749">Sporulation</keyword>
<keyword id="KW-0804">Transcription</keyword>
<keyword id="KW-0805">Transcription regulation</keyword>
<gene>
    <name type="primary">IME1</name>
    <name type="ordered locus">YJR094C</name>
    <name type="ORF">J1916</name>
</gene>
<organism>
    <name type="scientific">Saccharomyces cerevisiae (strain ATCC 204508 / S288c)</name>
    <name type="common">Baker's yeast</name>
    <dbReference type="NCBI Taxonomy" id="559292"/>
    <lineage>
        <taxon>Eukaryota</taxon>
        <taxon>Fungi</taxon>
        <taxon>Dikarya</taxon>
        <taxon>Ascomycota</taxon>
        <taxon>Saccharomycotina</taxon>
        <taxon>Saccharomycetes</taxon>
        <taxon>Saccharomycetales</taxon>
        <taxon>Saccharomycetaceae</taxon>
        <taxon>Saccharomyces</taxon>
    </lineage>
</organism>
<name>IME1_YEAST</name>
<proteinExistence type="evidence at protein level"/>
<reference key="1">
    <citation type="journal article" date="1990" name="Mol. Cell. Biol.">
        <title>Role of IME1 expression in regulation of meiosis in Saccharomyces cerevisiae.</title>
        <authorList>
            <person name="Smith H.E."/>
            <person name="Su S.S.Y."/>
            <person name="Neigeborn L."/>
            <person name="Driscoll S.E."/>
            <person name="Mitchell A.P."/>
        </authorList>
    </citation>
    <scope>NUCLEOTIDE SEQUENCE [GENOMIC DNA]</scope>
    <source>
        <strain>SK1</strain>
    </source>
</reference>
<reference key="2">
    <citation type="journal article" date="1993" name="Mol. Gen. Genet.">
        <title>Post-transcriptional regulation of IME1 determines initiation of meiosis in Saccharomyces cerevisiae.</title>
        <authorList>
            <person name="Sherman A."/>
            <person name="Shefer M."/>
            <person name="Sagee S."/>
            <person name="Kassir Y."/>
        </authorList>
    </citation>
    <scope>NUCLEOTIDE SEQUENCE [GENOMIC DNA]</scope>
</reference>
<reference key="3">
    <citation type="journal article" date="1996" name="EMBO J.">
        <title>Complete nucleotide sequence of Saccharomyces cerevisiae chromosome X.</title>
        <authorList>
            <person name="Galibert F."/>
            <person name="Alexandraki D."/>
            <person name="Baur A."/>
            <person name="Boles E."/>
            <person name="Chalwatzis N."/>
            <person name="Chuat J.-C."/>
            <person name="Coster F."/>
            <person name="Cziepluch C."/>
            <person name="de Haan M."/>
            <person name="Domdey H."/>
            <person name="Durand P."/>
            <person name="Entian K.-D."/>
            <person name="Gatius M."/>
            <person name="Goffeau A."/>
            <person name="Grivell L.A."/>
            <person name="Hennemann A."/>
            <person name="Herbert C.J."/>
            <person name="Heumann K."/>
            <person name="Hilger F."/>
            <person name="Hollenberg C.P."/>
            <person name="Huang M.-E."/>
            <person name="Jacq C."/>
            <person name="Jauniaux J.-C."/>
            <person name="Katsoulou C."/>
            <person name="Kirchrath L."/>
            <person name="Kleine K."/>
            <person name="Kordes E."/>
            <person name="Koetter P."/>
            <person name="Liebl S."/>
            <person name="Louis E.J."/>
            <person name="Manus V."/>
            <person name="Mewes H.-W."/>
            <person name="Miosga T."/>
            <person name="Obermaier B."/>
            <person name="Perea J."/>
            <person name="Pohl T.M."/>
            <person name="Portetelle D."/>
            <person name="Pujol A."/>
            <person name="Purnelle B."/>
            <person name="Ramezani Rad M."/>
            <person name="Rasmussen S.W."/>
            <person name="Rose M."/>
            <person name="Rossau R."/>
            <person name="Schaaff-Gerstenschlaeger I."/>
            <person name="Smits P.H.M."/>
            <person name="Scarcez T."/>
            <person name="Soriano N."/>
            <person name="To Van D."/>
            <person name="Tzermia M."/>
            <person name="Van Broekhoven A."/>
            <person name="Vandenbol M."/>
            <person name="Wedler H."/>
            <person name="von Wettstein D."/>
            <person name="Wambutt R."/>
            <person name="Zagulski M."/>
            <person name="Zollner A."/>
            <person name="Karpfinger-Hartl L."/>
        </authorList>
    </citation>
    <scope>NUCLEOTIDE SEQUENCE [LARGE SCALE GENOMIC DNA]</scope>
    <source>
        <strain>ATCC 204508 / S288c</strain>
    </source>
</reference>
<reference key="4">
    <citation type="journal article" date="2014" name="G3 (Bethesda)">
        <title>The reference genome sequence of Saccharomyces cerevisiae: Then and now.</title>
        <authorList>
            <person name="Engel S.R."/>
            <person name="Dietrich F.S."/>
            <person name="Fisk D.G."/>
            <person name="Binkley G."/>
            <person name="Balakrishnan R."/>
            <person name="Costanzo M.C."/>
            <person name="Dwight S.S."/>
            <person name="Hitz B.C."/>
            <person name="Karra K."/>
            <person name="Nash R.S."/>
            <person name="Weng S."/>
            <person name="Wong E.D."/>
            <person name="Lloyd P."/>
            <person name="Skrzypek M.S."/>
            <person name="Miyasato S.R."/>
            <person name="Simison M."/>
            <person name="Cherry J.M."/>
        </authorList>
    </citation>
    <scope>GENOME REANNOTATION</scope>
    <source>
        <strain>ATCC 204508 / S288c</strain>
    </source>
</reference>
<reference key="5">
    <citation type="journal article" date="2013" name="Cell">
        <title>High-resolution mapping reveals a conserved, widespread, dynamic mRNA methylation program in yeast meiosis.</title>
        <authorList>
            <person name="Schwartz S."/>
            <person name="Agarwala S.D."/>
            <person name="Mumbach M.R."/>
            <person name="Jovanovic M."/>
            <person name="Mertins P."/>
            <person name="Shishkin A."/>
            <person name="Tabach Y."/>
            <person name="Mikkelsen T.S."/>
            <person name="Satija R."/>
            <person name="Ruvkun G."/>
            <person name="Carr S.A."/>
            <person name="Lander E.S."/>
            <person name="Fink G.R."/>
            <person name="Regev A."/>
        </authorList>
    </citation>
    <scope>FUNCTION</scope>
</reference>
<sequence>MQADMHGKLHAALEDGFFLFPFEQQQQPNIYYDTTTDQEDRPCFSFGSTISPRSWHFEKSDKIASSQLQNLVHTQPIHLINPQILFNEEFLNLENIDSQPISKETKTTKDCTMATGPERGKKSSESTRSSSLSSLFSNDESASTFHSSFNNHDNFQKSNRNGDDIDISDTIKYETNTNAQKDIKIFQENFEFNEFPYTQDFYPYTTNYTYSKPTNIHESINSKNTDSYSQYQDQFPPHTDNIHSFNNRHYSNHKSTNCNYYNNTSNNNNASDNVYEADPFIDEPQVPSYYYPLEIAFDVEKSPPPSLQKLNSKELEFLKKLNSKLSRYAAAYSFSSSNDQDYYDKVRFQEISYKFSKTYS</sequence>
<comment type="function">
    <text evidence="2">Transcription factor required for sporulation and for early sporulation-specific genes expression. Positive regulator of SME1/IME2 expression. Directly activates expression of SLZ1 during meiosis.</text>
</comment>
<comment type="subunit">
    <text>Interacts with UME6.</text>
</comment>
<comment type="interaction">
    <interactant intactId="EBI-9199">
        <id>P21190</id>
    </interactant>
    <interactant intactId="EBI-10642">
        <id>P38615</id>
        <label>RIM11</label>
    </interactant>
    <organismsDiffer>false</organismsDiffer>
    <experiments>4</experiments>
</comment>
<comment type="interaction">
    <interactant intactId="EBI-9199">
        <id>P21190</id>
    </interactant>
    <interactant intactId="EBI-20086">
        <id>P39001</id>
        <label>UME6</label>
    </interactant>
    <organismsDiffer>false</organismsDiffer>
    <experiments>3</experiments>
</comment>
<comment type="subcellular location">
    <subcellularLocation>
        <location>Nucleus</location>
    </subcellularLocation>
</comment>
<comment type="induction">
    <text>Starvation of yeast cells may stimulate activity of IME1 through a post-translational mechanism.</text>
</comment>
<feature type="chain" id="PRO_0000084181" description="Meiosis-inducing protein 1">
    <location>
        <begin position="1"/>
        <end position="360"/>
    </location>
</feature>
<feature type="region of interest" description="Disordered" evidence="1">
    <location>
        <begin position="102"/>
        <end position="135"/>
    </location>
</feature>
<feature type="compositionally biased region" description="Low complexity" evidence="1">
    <location>
        <begin position="126"/>
        <end position="135"/>
    </location>
</feature>